<accession>Q6GJQ9</accession>
<proteinExistence type="inferred from homology"/>
<gene>
    <name evidence="1" type="primary">xpt</name>
    <name type="ordered locus">SAR0406</name>
</gene>
<organism>
    <name type="scientific">Staphylococcus aureus (strain MRSA252)</name>
    <dbReference type="NCBI Taxonomy" id="282458"/>
    <lineage>
        <taxon>Bacteria</taxon>
        <taxon>Bacillati</taxon>
        <taxon>Bacillota</taxon>
        <taxon>Bacilli</taxon>
        <taxon>Bacillales</taxon>
        <taxon>Staphylococcaceae</taxon>
        <taxon>Staphylococcus</taxon>
    </lineage>
</organism>
<protein>
    <recommendedName>
        <fullName evidence="1">Xanthine phosphoribosyltransferase</fullName>
        <shortName evidence="1">XPRTase</shortName>
        <ecNumber evidence="1">2.4.2.22</ecNumber>
    </recommendedName>
</protein>
<sequence length="192" mass="20913">MELLGQKVKEDGVVIDERILKVDGFLNHQIDAKLMDEVGRTFYEQFKDKGITKILTIEASGIAPAIMAALHFDVPCLFAKKAKPSTLTDGYYETSIHSFTKNKTSTVIVSKEFLSEEDTVLIIDDFLANGDASLGLYDIAQQANAKTAGIGIVVEKSFQNGHQRLEEAGLTVSSLCKVASLEGNKVTLVGEE</sequence>
<keyword id="KW-0963">Cytoplasm</keyword>
<keyword id="KW-0328">Glycosyltransferase</keyword>
<keyword id="KW-0660">Purine salvage</keyword>
<keyword id="KW-0808">Transferase</keyword>
<comment type="function">
    <text evidence="1">Converts the preformed base xanthine, a product of nucleic acid breakdown, to xanthosine 5'-monophosphate (XMP), so it can be reused for RNA or DNA synthesis.</text>
</comment>
<comment type="catalytic activity">
    <reaction evidence="1">
        <text>XMP + diphosphate = xanthine + 5-phospho-alpha-D-ribose 1-diphosphate</text>
        <dbReference type="Rhea" id="RHEA:10800"/>
        <dbReference type="ChEBI" id="CHEBI:17712"/>
        <dbReference type="ChEBI" id="CHEBI:33019"/>
        <dbReference type="ChEBI" id="CHEBI:57464"/>
        <dbReference type="ChEBI" id="CHEBI:58017"/>
        <dbReference type="EC" id="2.4.2.22"/>
    </reaction>
</comment>
<comment type="pathway">
    <text evidence="1">Purine metabolism; XMP biosynthesis via salvage pathway; XMP from xanthine: step 1/1.</text>
</comment>
<comment type="subunit">
    <text evidence="1">Homodimer.</text>
</comment>
<comment type="subcellular location">
    <subcellularLocation>
        <location evidence="1">Cytoplasm</location>
    </subcellularLocation>
</comment>
<comment type="similarity">
    <text evidence="1">Belongs to the purine/pyrimidine phosphoribosyltransferase family. Xpt subfamily.</text>
</comment>
<reference key="1">
    <citation type="journal article" date="2004" name="Proc. Natl. Acad. Sci. U.S.A.">
        <title>Complete genomes of two clinical Staphylococcus aureus strains: evidence for the rapid evolution of virulence and drug resistance.</title>
        <authorList>
            <person name="Holden M.T.G."/>
            <person name="Feil E.J."/>
            <person name="Lindsay J.A."/>
            <person name="Peacock S.J."/>
            <person name="Day N.P.J."/>
            <person name="Enright M.C."/>
            <person name="Foster T.J."/>
            <person name="Moore C.E."/>
            <person name="Hurst L."/>
            <person name="Atkin R."/>
            <person name="Barron A."/>
            <person name="Bason N."/>
            <person name="Bentley S.D."/>
            <person name="Chillingworth C."/>
            <person name="Chillingworth T."/>
            <person name="Churcher C."/>
            <person name="Clark L."/>
            <person name="Corton C."/>
            <person name="Cronin A."/>
            <person name="Doggett J."/>
            <person name="Dowd L."/>
            <person name="Feltwell T."/>
            <person name="Hance Z."/>
            <person name="Harris B."/>
            <person name="Hauser H."/>
            <person name="Holroyd S."/>
            <person name="Jagels K."/>
            <person name="James K.D."/>
            <person name="Lennard N."/>
            <person name="Line A."/>
            <person name="Mayes R."/>
            <person name="Moule S."/>
            <person name="Mungall K."/>
            <person name="Ormond D."/>
            <person name="Quail M.A."/>
            <person name="Rabbinowitsch E."/>
            <person name="Rutherford K.M."/>
            <person name="Sanders M."/>
            <person name="Sharp S."/>
            <person name="Simmonds M."/>
            <person name="Stevens K."/>
            <person name="Whitehead S."/>
            <person name="Barrell B.G."/>
            <person name="Spratt B.G."/>
            <person name="Parkhill J."/>
        </authorList>
    </citation>
    <scope>NUCLEOTIDE SEQUENCE [LARGE SCALE GENOMIC DNA]</scope>
    <source>
        <strain>MRSA252</strain>
    </source>
</reference>
<evidence type="ECO:0000255" key="1">
    <source>
        <dbReference type="HAMAP-Rule" id="MF_01184"/>
    </source>
</evidence>
<name>XPT_STAAR</name>
<dbReference type="EC" id="2.4.2.22" evidence="1"/>
<dbReference type="EMBL" id="BX571856">
    <property type="protein sequence ID" value="CAG39430.1"/>
    <property type="molecule type" value="Genomic_DNA"/>
</dbReference>
<dbReference type="RefSeq" id="WP_000421416.1">
    <property type="nucleotide sequence ID" value="NC_002952.2"/>
</dbReference>
<dbReference type="SMR" id="Q6GJQ9"/>
<dbReference type="KEGG" id="sar:SAR0406"/>
<dbReference type="HOGENOM" id="CLU_099015_0_0_9"/>
<dbReference type="UniPathway" id="UPA00602">
    <property type="reaction ID" value="UER00658"/>
</dbReference>
<dbReference type="Proteomes" id="UP000000596">
    <property type="component" value="Chromosome"/>
</dbReference>
<dbReference type="GO" id="GO:0005737">
    <property type="term" value="C:cytoplasm"/>
    <property type="evidence" value="ECO:0007669"/>
    <property type="project" value="UniProtKB-SubCell"/>
</dbReference>
<dbReference type="GO" id="GO:0000310">
    <property type="term" value="F:xanthine phosphoribosyltransferase activity"/>
    <property type="evidence" value="ECO:0007669"/>
    <property type="project" value="UniProtKB-UniRule"/>
</dbReference>
<dbReference type="GO" id="GO:0006166">
    <property type="term" value="P:purine ribonucleoside salvage"/>
    <property type="evidence" value="ECO:0007669"/>
    <property type="project" value="UniProtKB-KW"/>
</dbReference>
<dbReference type="GO" id="GO:0046110">
    <property type="term" value="P:xanthine metabolic process"/>
    <property type="evidence" value="ECO:0007669"/>
    <property type="project" value="InterPro"/>
</dbReference>
<dbReference type="GO" id="GO:0032265">
    <property type="term" value="P:XMP salvage"/>
    <property type="evidence" value="ECO:0007669"/>
    <property type="project" value="UniProtKB-UniRule"/>
</dbReference>
<dbReference type="CDD" id="cd06223">
    <property type="entry name" value="PRTases_typeI"/>
    <property type="match status" value="1"/>
</dbReference>
<dbReference type="Gene3D" id="3.40.50.2020">
    <property type="match status" value="1"/>
</dbReference>
<dbReference type="HAMAP" id="MF_01184">
    <property type="entry name" value="XPRTase"/>
    <property type="match status" value="1"/>
</dbReference>
<dbReference type="InterPro" id="IPR000836">
    <property type="entry name" value="PRibTrfase_dom"/>
</dbReference>
<dbReference type="InterPro" id="IPR029057">
    <property type="entry name" value="PRTase-like"/>
</dbReference>
<dbReference type="InterPro" id="IPR050118">
    <property type="entry name" value="Pur/Pyrimidine_PRTase"/>
</dbReference>
<dbReference type="InterPro" id="IPR010079">
    <property type="entry name" value="Xanthine_PRibTrfase"/>
</dbReference>
<dbReference type="NCBIfam" id="NF006671">
    <property type="entry name" value="PRK09219.1"/>
    <property type="match status" value="1"/>
</dbReference>
<dbReference type="NCBIfam" id="TIGR01744">
    <property type="entry name" value="XPRTase"/>
    <property type="match status" value="1"/>
</dbReference>
<dbReference type="PANTHER" id="PTHR43864">
    <property type="entry name" value="HYPOXANTHINE/GUANINE PHOSPHORIBOSYLTRANSFERASE"/>
    <property type="match status" value="1"/>
</dbReference>
<dbReference type="PANTHER" id="PTHR43864:SF1">
    <property type="entry name" value="XANTHINE PHOSPHORIBOSYLTRANSFERASE"/>
    <property type="match status" value="1"/>
</dbReference>
<dbReference type="SUPFAM" id="SSF53271">
    <property type="entry name" value="PRTase-like"/>
    <property type="match status" value="1"/>
</dbReference>
<feature type="chain" id="PRO_0000339745" description="Xanthine phosphoribosyltransferase">
    <location>
        <begin position="1"/>
        <end position="192"/>
    </location>
</feature>
<feature type="binding site" evidence="1">
    <location>
        <position position="20"/>
    </location>
    <ligand>
        <name>xanthine</name>
        <dbReference type="ChEBI" id="CHEBI:17712"/>
    </ligand>
</feature>
<feature type="binding site" evidence="1">
    <location>
        <position position="27"/>
    </location>
    <ligand>
        <name>xanthine</name>
        <dbReference type="ChEBI" id="CHEBI:17712"/>
    </ligand>
</feature>
<feature type="binding site" evidence="1">
    <location>
        <begin position="128"/>
        <end position="132"/>
    </location>
    <ligand>
        <name>5-phospho-alpha-D-ribose 1-diphosphate</name>
        <dbReference type="ChEBI" id="CHEBI:58017"/>
    </ligand>
</feature>
<feature type="binding site" evidence="1">
    <location>
        <position position="156"/>
    </location>
    <ligand>
        <name>xanthine</name>
        <dbReference type="ChEBI" id="CHEBI:17712"/>
    </ligand>
</feature>